<gene>
    <name type="primary">guaA</name>
    <name type="ordered locus">NMA0534</name>
</gene>
<proteinExistence type="inferred from homology"/>
<sequence>MTQDKILILDFGSQVTQLIARRVREAHVYCELHSFDMPLDEIKAFNPKGIILSGGPNSVYESDYQADTGIFDLGIPILGICYGMQFMAHHLGGEVQPGNQREFGYAQVKTIDSELTRGIQDDTPNTLDVWMSHGDKVSKLPTGFTVIGDTPSCPIAMMENAEKQFYGIQFHPEVTHTKQGRALLNRFVLDICGAQPGWTMPNYIEEAVAKIREQVGSDEVILGLSGGVDSSVAAALIHRAIGDQLTCVFVDHGLLRLNEGKMVMDMFARNLGVKVIHVDAEGQFMAKLAGVTDPEKKRKIIGAEFIEVFDAEEKKLTNAKWLAQGTIYPDVIESAGAKTKKAHAIKSHHNVGGLPENMKLKLLEPLRDLFKDEVRELGVALGLPREMVYRHPFPGPGLGVRILGEVKKEYADLLRQADDIFIQELRNTTDENGTSWYDLTSQAFAVFLPVKSVGVMGDGRTYDYVVALRAVITSDFMTAHWAELPYSLLGRVSNRIINEVKGINRVVYDVSGKPPATIEWE</sequence>
<dbReference type="EC" id="6.3.5.2"/>
<dbReference type="EMBL" id="AL157959">
    <property type="protein sequence ID" value="CAM07811.1"/>
    <property type="molecule type" value="Genomic_DNA"/>
</dbReference>
<dbReference type="PIR" id="G81971">
    <property type="entry name" value="G81971"/>
</dbReference>
<dbReference type="RefSeq" id="WP_002236175.1">
    <property type="nucleotide sequence ID" value="NC_003116.1"/>
</dbReference>
<dbReference type="SMR" id="Q9JW60"/>
<dbReference type="EnsemblBacteria" id="CAM07811">
    <property type="protein sequence ID" value="CAM07811"/>
    <property type="gene ID" value="NMA0534"/>
</dbReference>
<dbReference type="GeneID" id="93386825"/>
<dbReference type="KEGG" id="nma:NMA0534"/>
<dbReference type="HOGENOM" id="CLU_014340_0_5_4"/>
<dbReference type="UniPathway" id="UPA00189">
    <property type="reaction ID" value="UER00296"/>
</dbReference>
<dbReference type="Proteomes" id="UP000000626">
    <property type="component" value="Chromosome"/>
</dbReference>
<dbReference type="GO" id="GO:0005829">
    <property type="term" value="C:cytosol"/>
    <property type="evidence" value="ECO:0007669"/>
    <property type="project" value="TreeGrafter"/>
</dbReference>
<dbReference type="GO" id="GO:0005524">
    <property type="term" value="F:ATP binding"/>
    <property type="evidence" value="ECO:0007669"/>
    <property type="project" value="UniProtKB-UniRule"/>
</dbReference>
<dbReference type="GO" id="GO:0003921">
    <property type="term" value="F:GMP synthase activity"/>
    <property type="evidence" value="ECO:0007669"/>
    <property type="project" value="InterPro"/>
</dbReference>
<dbReference type="CDD" id="cd01742">
    <property type="entry name" value="GATase1_GMP_Synthase"/>
    <property type="match status" value="1"/>
</dbReference>
<dbReference type="CDD" id="cd01997">
    <property type="entry name" value="GMP_synthase_C"/>
    <property type="match status" value="1"/>
</dbReference>
<dbReference type="FunFam" id="3.30.300.10:FF:000002">
    <property type="entry name" value="GMP synthase [glutamine-hydrolyzing]"/>
    <property type="match status" value="1"/>
</dbReference>
<dbReference type="FunFam" id="3.40.50.620:FF:000001">
    <property type="entry name" value="GMP synthase [glutamine-hydrolyzing]"/>
    <property type="match status" value="1"/>
</dbReference>
<dbReference type="FunFam" id="3.40.50.880:FF:000001">
    <property type="entry name" value="GMP synthase [glutamine-hydrolyzing]"/>
    <property type="match status" value="1"/>
</dbReference>
<dbReference type="Gene3D" id="3.30.300.10">
    <property type="match status" value="1"/>
</dbReference>
<dbReference type="Gene3D" id="3.40.50.880">
    <property type="match status" value="1"/>
</dbReference>
<dbReference type="Gene3D" id="3.40.50.620">
    <property type="entry name" value="HUPs"/>
    <property type="match status" value="1"/>
</dbReference>
<dbReference type="HAMAP" id="MF_00344">
    <property type="entry name" value="GMP_synthase"/>
    <property type="match status" value="1"/>
</dbReference>
<dbReference type="InterPro" id="IPR029062">
    <property type="entry name" value="Class_I_gatase-like"/>
</dbReference>
<dbReference type="InterPro" id="IPR017926">
    <property type="entry name" value="GATASE"/>
</dbReference>
<dbReference type="InterPro" id="IPR001674">
    <property type="entry name" value="GMP_synth_C"/>
</dbReference>
<dbReference type="InterPro" id="IPR004739">
    <property type="entry name" value="GMP_synth_GATase"/>
</dbReference>
<dbReference type="InterPro" id="IPR022955">
    <property type="entry name" value="GMP_synthase"/>
</dbReference>
<dbReference type="InterPro" id="IPR025777">
    <property type="entry name" value="GMPS_ATP_PPase_dom"/>
</dbReference>
<dbReference type="InterPro" id="IPR022310">
    <property type="entry name" value="NAD/GMP_synthase"/>
</dbReference>
<dbReference type="InterPro" id="IPR014729">
    <property type="entry name" value="Rossmann-like_a/b/a_fold"/>
</dbReference>
<dbReference type="NCBIfam" id="TIGR00884">
    <property type="entry name" value="guaA_Cterm"/>
    <property type="match status" value="1"/>
</dbReference>
<dbReference type="NCBIfam" id="TIGR00888">
    <property type="entry name" value="guaA_Nterm"/>
    <property type="match status" value="1"/>
</dbReference>
<dbReference type="NCBIfam" id="NF000848">
    <property type="entry name" value="PRK00074.1"/>
    <property type="match status" value="1"/>
</dbReference>
<dbReference type="PANTHER" id="PTHR11922:SF2">
    <property type="entry name" value="GMP SYNTHASE [GLUTAMINE-HYDROLYZING]"/>
    <property type="match status" value="1"/>
</dbReference>
<dbReference type="PANTHER" id="PTHR11922">
    <property type="entry name" value="GMP SYNTHASE-RELATED"/>
    <property type="match status" value="1"/>
</dbReference>
<dbReference type="Pfam" id="PF00117">
    <property type="entry name" value="GATase"/>
    <property type="match status" value="1"/>
</dbReference>
<dbReference type="Pfam" id="PF00958">
    <property type="entry name" value="GMP_synt_C"/>
    <property type="match status" value="1"/>
</dbReference>
<dbReference type="Pfam" id="PF02540">
    <property type="entry name" value="NAD_synthase"/>
    <property type="match status" value="1"/>
</dbReference>
<dbReference type="PRINTS" id="PR00097">
    <property type="entry name" value="ANTSNTHASEII"/>
</dbReference>
<dbReference type="PRINTS" id="PR00096">
    <property type="entry name" value="GATASE"/>
</dbReference>
<dbReference type="SUPFAM" id="SSF52402">
    <property type="entry name" value="Adenine nucleotide alpha hydrolases-like"/>
    <property type="match status" value="1"/>
</dbReference>
<dbReference type="SUPFAM" id="SSF52317">
    <property type="entry name" value="Class I glutamine amidotransferase-like"/>
    <property type="match status" value="1"/>
</dbReference>
<dbReference type="SUPFAM" id="SSF54810">
    <property type="entry name" value="GMP synthetase C-terminal dimerisation domain"/>
    <property type="match status" value="1"/>
</dbReference>
<dbReference type="PROSITE" id="PS51273">
    <property type="entry name" value="GATASE_TYPE_1"/>
    <property type="match status" value="1"/>
</dbReference>
<dbReference type="PROSITE" id="PS51553">
    <property type="entry name" value="GMPS_ATP_PPASE"/>
    <property type="match status" value="1"/>
</dbReference>
<accession>Q9JW60</accession>
<accession>A1IPY6</accession>
<feature type="chain" id="PRO_0000140151" description="GMP synthase [glutamine-hydrolyzing]">
    <location>
        <begin position="1"/>
        <end position="521"/>
    </location>
</feature>
<feature type="domain" description="Glutamine amidotransferase type-1">
    <location>
        <begin position="5"/>
        <end position="197"/>
    </location>
</feature>
<feature type="domain" description="GMPS ATP-PPase">
    <location>
        <begin position="198"/>
        <end position="390"/>
    </location>
</feature>
<feature type="active site" description="Nucleophile" evidence="1">
    <location>
        <position position="81"/>
    </location>
</feature>
<feature type="active site" evidence="1">
    <location>
        <position position="171"/>
    </location>
</feature>
<feature type="active site" evidence="1">
    <location>
        <position position="173"/>
    </location>
</feature>
<feature type="binding site" evidence="1">
    <location>
        <begin position="225"/>
        <end position="231"/>
    </location>
    <ligand>
        <name>ATP</name>
        <dbReference type="ChEBI" id="CHEBI:30616"/>
    </ligand>
</feature>
<organism>
    <name type="scientific">Neisseria meningitidis serogroup A / serotype 4A (strain DSM 15465 / Z2491)</name>
    <dbReference type="NCBI Taxonomy" id="122587"/>
    <lineage>
        <taxon>Bacteria</taxon>
        <taxon>Pseudomonadati</taxon>
        <taxon>Pseudomonadota</taxon>
        <taxon>Betaproteobacteria</taxon>
        <taxon>Neisseriales</taxon>
        <taxon>Neisseriaceae</taxon>
        <taxon>Neisseria</taxon>
    </lineage>
</organism>
<keyword id="KW-0067">ATP-binding</keyword>
<keyword id="KW-0315">Glutamine amidotransferase</keyword>
<keyword id="KW-0332">GMP biosynthesis</keyword>
<keyword id="KW-0436">Ligase</keyword>
<keyword id="KW-0547">Nucleotide-binding</keyword>
<keyword id="KW-0658">Purine biosynthesis</keyword>
<comment type="function">
    <text evidence="1">Catalyzes the synthesis of GMP from XMP.</text>
</comment>
<comment type="catalytic activity">
    <reaction>
        <text>XMP + L-glutamine + ATP + H2O = GMP + L-glutamate + AMP + diphosphate + 2 H(+)</text>
        <dbReference type="Rhea" id="RHEA:11680"/>
        <dbReference type="ChEBI" id="CHEBI:15377"/>
        <dbReference type="ChEBI" id="CHEBI:15378"/>
        <dbReference type="ChEBI" id="CHEBI:29985"/>
        <dbReference type="ChEBI" id="CHEBI:30616"/>
        <dbReference type="ChEBI" id="CHEBI:33019"/>
        <dbReference type="ChEBI" id="CHEBI:57464"/>
        <dbReference type="ChEBI" id="CHEBI:58115"/>
        <dbReference type="ChEBI" id="CHEBI:58359"/>
        <dbReference type="ChEBI" id="CHEBI:456215"/>
        <dbReference type="EC" id="6.3.5.2"/>
    </reaction>
</comment>
<comment type="pathway">
    <text>Purine metabolism; GMP biosynthesis; GMP from XMP (L-Gln route): step 1/1.</text>
</comment>
<comment type="subunit">
    <text evidence="1">Homodimer.</text>
</comment>
<protein>
    <recommendedName>
        <fullName>GMP synthase [glutamine-hydrolyzing]</fullName>
        <ecNumber>6.3.5.2</ecNumber>
    </recommendedName>
    <alternativeName>
        <fullName>GMP synthetase</fullName>
    </alternativeName>
    <alternativeName>
        <fullName>Glutamine amidotransferase</fullName>
    </alternativeName>
</protein>
<reference key="1">
    <citation type="journal article" date="2000" name="Nature">
        <title>Complete DNA sequence of a serogroup A strain of Neisseria meningitidis Z2491.</title>
        <authorList>
            <person name="Parkhill J."/>
            <person name="Achtman M."/>
            <person name="James K.D."/>
            <person name="Bentley S.D."/>
            <person name="Churcher C.M."/>
            <person name="Klee S.R."/>
            <person name="Morelli G."/>
            <person name="Basham D."/>
            <person name="Brown D."/>
            <person name="Chillingworth T."/>
            <person name="Davies R.M."/>
            <person name="Davis P."/>
            <person name="Devlin K."/>
            <person name="Feltwell T."/>
            <person name="Hamlin N."/>
            <person name="Holroyd S."/>
            <person name="Jagels K."/>
            <person name="Leather S."/>
            <person name="Moule S."/>
            <person name="Mungall K.L."/>
            <person name="Quail M.A."/>
            <person name="Rajandream M.A."/>
            <person name="Rutherford K.M."/>
            <person name="Simmonds M."/>
            <person name="Skelton J."/>
            <person name="Whitehead S."/>
            <person name="Spratt B.G."/>
            <person name="Barrell B.G."/>
        </authorList>
    </citation>
    <scope>NUCLEOTIDE SEQUENCE [LARGE SCALE GENOMIC DNA]</scope>
    <source>
        <strain>DSM 15465 / Z2491</strain>
    </source>
</reference>
<name>GUAA_NEIMA</name>
<evidence type="ECO:0000250" key="1"/>